<reference evidence="11 15" key="1">
    <citation type="journal article" date="2002" name="Nucleic Acids Res.">
        <title>Methylation of Xenopus CIRP2 regulates its arginine- and glycine-rich region-mediated nucleocytoplasmic distribution.</title>
        <authorList>
            <person name="Aoki K."/>
            <person name="Ishii Y."/>
            <person name="Matsumoto K."/>
            <person name="Tsujimoto M."/>
        </authorList>
    </citation>
    <scope>NUCLEOTIDE SEQUENCE [MRNA] (ISOFORM 1)</scope>
    <scope>FUNCTION</scope>
    <scope>INTERACTION WITH CIRBP</scope>
    <scope>CATALYTIC ACTIVITY</scope>
    <source>
        <tissue evidence="5">Oocyte</tissue>
    </source>
</reference>
<reference evidence="11 13" key="2">
    <citation type="submission" date="2003-07" db="EMBL/GenBank/DDBJ databases">
        <authorList>
            <consortium name="NIH - Xenopus Gene Collection (XGC) project"/>
        </authorList>
    </citation>
    <scope>NUCLEOTIDE SEQUENCE [LARGE SCALE MRNA] (ISOFORM 2)</scope>
    <source>
        <tissue evidence="14">Tadpole</tissue>
        <tissue evidence="13">Tail bud</tissue>
    </source>
</reference>
<reference evidence="11" key="3">
    <citation type="journal article" date="2006" name="BMC Genomics">
        <title>Cross-species hybridizations on a multi-species cDNA microarray to identify evolutionarily conserved genes expressed in oocytes.</title>
        <authorList>
            <person name="Vallee M."/>
            <person name="Robert C."/>
            <person name="Methot S."/>
            <person name="Palin M.F."/>
            <person name="Sirard M.A."/>
        </authorList>
    </citation>
    <scope>DEVELOPMENTAL STAGE</scope>
</reference>
<reference evidence="11" key="4">
    <citation type="journal article" date="2006" name="J. Biol. Chem.">
        <title>RAP55, a cytoplasmic mRNP component, represses translation in Xenopus oocytes.</title>
        <authorList>
            <person name="Tanaka K.J."/>
            <person name="Ogawa K."/>
            <person name="Takagi M."/>
            <person name="Imamoto N."/>
            <person name="Matsumoto K."/>
            <person name="Tsujimoto M."/>
        </authorList>
    </citation>
    <scope>IDENTIFICATION IN A COMPLEX WITH LSM14A</scope>
</reference>
<reference evidence="11" key="5">
    <citation type="journal article" date="2009" name="Mol. Cell. Biol.">
        <title>Novel functions of protein arginine methyltransferase 1 in thyroid hormone receptor-mediated transcription and in the regulation of metamorphic rate in Xenopus laevis.</title>
        <authorList>
            <person name="Matsuda H."/>
            <person name="Paul B.D."/>
            <person name="Choi C.Y."/>
            <person name="Hasebe T."/>
            <person name="Shi Y.B."/>
        </authorList>
    </citation>
    <scope>FUNCTION</scope>
    <scope>DEVELOPMENTAL STAGE</scope>
</reference>
<accession>Q8AV13</accession>
<accession>Q7SY97</accession>
<accession>Q7ZY05</accession>
<keyword id="KW-0010">Activator</keyword>
<keyword id="KW-0025">Alternative splicing</keyword>
<keyword id="KW-0963">Cytoplasm</keyword>
<keyword id="KW-0217">Developmental protein</keyword>
<keyword id="KW-0221">Differentiation</keyword>
<keyword id="KW-0489">Methyltransferase</keyword>
<keyword id="KW-0524">Neurogenesis</keyword>
<keyword id="KW-0539">Nucleus</keyword>
<keyword id="KW-1185">Reference proteome</keyword>
<keyword id="KW-0949">S-adenosyl-L-methionine</keyword>
<keyword id="KW-0804">Transcription</keyword>
<keyword id="KW-0805">Transcription regulation</keyword>
<keyword id="KW-0808">Transferase</keyword>
<name>ANM1A_XENLA</name>
<dbReference type="EC" id="2.1.1.319" evidence="5"/>
<dbReference type="EMBL" id="AB085173">
    <property type="protein sequence ID" value="BAC53990.1"/>
    <property type="molecule type" value="mRNA"/>
</dbReference>
<dbReference type="EMBL" id="BC044033">
    <property type="protein sequence ID" value="AAH44033.1"/>
    <property type="status" value="ALT_INIT"/>
    <property type="molecule type" value="mRNA"/>
</dbReference>
<dbReference type="EMBL" id="BC054955">
    <property type="protein sequence ID" value="AAH54955.1"/>
    <property type="status" value="ALT_INIT"/>
    <property type="molecule type" value="mRNA"/>
</dbReference>
<dbReference type="RefSeq" id="NP_001083793.1">
    <molecule id="Q8AV13-1"/>
    <property type="nucleotide sequence ID" value="NM_001090324.1"/>
</dbReference>
<dbReference type="SMR" id="Q8AV13"/>
<dbReference type="DNASU" id="399121"/>
<dbReference type="GeneID" id="399121"/>
<dbReference type="KEGG" id="xla:399121"/>
<dbReference type="AGR" id="Xenbase:XB-GENE-6254417"/>
<dbReference type="CTD" id="399121"/>
<dbReference type="Xenbase" id="XB-GENE-6254417">
    <property type="gene designation" value="prmt1.S"/>
</dbReference>
<dbReference type="OMA" id="QAMMEPI"/>
<dbReference type="OrthoDB" id="7848332at2759"/>
<dbReference type="Proteomes" id="UP000186698">
    <property type="component" value="Chromosome 7S"/>
</dbReference>
<dbReference type="Bgee" id="399121">
    <property type="expression patterns" value="Expressed in gastrula and 19 other cell types or tissues"/>
</dbReference>
<dbReference type="GO" id="GO:0005737">
    <property type="term" value="C:cytoplasm"/>
    <property type="evidence" value="ECO:0000250"/>
    <property type="project" value="UniProtKB"/>
</dbReference>
<dbReference type="GO" id="GO:0005829">
    <property type="term" value="C:cytosol"/>
    <property type="evidence" value="ECO:0007669"/>
    <property type="project" value="UniProtKB-SubCell"/>
</dbReference>
<dbReference type="GO" id="GO:0005654">
    <property type="term" value="C:nucleoplasm"/>
    <property type="evidence" value="ECO:0007669"/>
    <property type="project" value="UniProtKB-SubCell"/>
</dbReference>
<dbReference type="GO" id="GO:0005634">
    <property type="term" value="C:nucleus"/>
    <property type="evidence" value="ECO:0000250"/>
    <property type="project" value="UniProtKB"/>
</dbReference>
<dbReference type="GO" id="GO:0032991">
    <property type="term" value="C:protein-containing complex"/>
    <property type="evidence" value="ECO:0000353"/>
    <property type="project" value="UniProtKB"/>
</dbReference>
<dbReference type="GO" id="GO:0044020">
    <property type="term" value="F:histone H4R3 methyltransferase activity"/>
    <property type="evidence" value="ECO:0000250"/>
    <property type="project" value="UniProtKB"/>
</dbReference>
<dbReference type="GO" id="GO:0042054">
    <property type="term" value="F:histone methyltransferase activity"/>
    <property type="evidence" value="ECO:0000250"/>
    <property type="project" value="UniProtKB"/>
</dbReference>
<dbReference type="GO" id="GO:0042802">
    <property type="term" value="F:identical protein binding"/>
    <property type="evidence" value="ECO:0000250"/>
    <property type="project" value="UniProtKB"/>
</dbReference>
<dbReference type="GO" id="GO:0008170">
    <property type="term" value="F:N-methyltransferase activity"/>
    <property type="evidence" value="ECO:0000314"/>
    <property type="project" value="UniProtKB"/>
</dbReference>
<dbReference type="GO" id="GO:0008276">
    <property type="term" value="F:protein methyltransferase activity"/>
    <property type="evidence" value="ECO:0000250"/>
    <property type="project" value="UniProtKB"/>
</dbReference>
<dbReference type="GO" id="GO:0035242">
    <property type="term" value="F:protein-arginine omega-N asymmetric methyltransferase activity"/>
    <property type="evidence" value="ECO:0000318"/>
    <property type="project" value="GO_Central"/>
</dbReference>
<dbReference type="GO" id="GO:0035241">
    <property type="term" value="F:protein-arginine omega-N monomethyltransferase activity"/>
    <property type="evidence" value="ECO:0000250"/>
    <property type="project" value="UniProtKB"/>
</dbReference>
<dbReference type="GO" id="GO:1904047">
    <property type="term" value="F:S-adenosyl-L-methionine binding"/>
    <property type="evidence" value="ECO:0000250"/>
    <property type="project" value="UniProtKB"/>
</dbReference>
<dbReference type="GO" id="GO:0003713">
    <property type="term" value="F:transcription coactivator activity"/>
    <property type="evidence" value="ECO:0000315"/>
    <property type="project" value="UniProtKB"/>
</dbReference>
<dbReference type="GO" id="GO:0048738">
    <property type="term" value="P:cardiac muscle tissue development"/>
    <property type="evidence" value="ECO:0000250"/>
    <property type="project" value="UniProtKB"/>
</dbReference>
<dbReference type="GO" id="GO:0030154">
    <property type="term" value="P:cell differentiation"/>
    <property type="evidence" value="ECO:0007669"/>
    <property type="project" value="UniProtKB-KW"/>
</dbReference>
<dbReference type="GO" id="GO:0006338">
    <property type="term" value="P:chromatin remodeling"/>
    <property type="evidence" value="ECO:0000318"/>
    <property type="project" value="GO_Central"/>
</dbReference>
<dbReference type="GO" id="GO:0007552">
    <property type="term" value="P:metamorphosis"/>
    <property type="evidence" value="ECO:0000315"/>
    <property type="project" value="UniProtKB"/>
</dbReference>
<dbReference type="GO" id="GO:0045653">
    <property type="term" value="P:negative regulation of megakaryocyte differentiation"/>
    <property type="evidence" value="ECO:0000250"/>
    <property type="project" value="UniProtKB"/>
</dbReference>
<dbReference type="GO" id="GO:0007399">
    <property type="term" value="P:nervous system development"/>
    <property type="evidence" value="ECO:0007669"/>
    <property type="project" value="UniProtKB-KW"/>
</dbReference>
<dbReference type="GO" id="GO:0018216">
    <property type="term" value="P:peptidyl-arginine methylation"/>
    <property type="evidence" value="ECO:0000250"/>
    <property type="project" value="UniProtKB"/>
</dbReference>
<dbReference type="GO" id="GO:0008284">
    <property type="term" value="P:positive regulation of cell population proliferation"/>
    <property type="evidence" value="ECO:0000250"/>
    <property type="project" value="UniProtKB"/>
</dbReference>
<dbReference type="GO" id="GO:0045893">
    <property type="term" value="P:positive regulation of DNA-templated transcription"/>
    <property type="evidence" value="ECO:0000315"/>
    <property type="project" value="UniProtKB"/>
</dbReference>
<dbReference type="GO" id="GO:1905168">
    <property type="term" value="P:positive regulation of double-strand break repair via homologous recombination"/>
    <property type="evidence" value="ECO:0000250"/>
    <property type="project" value="UniProtKB"/>
</dbReference>
<dbReference type="GO" id="GO:0051260">
    <property type="term" value="P:protein homooligomerization"/>
    <property type="evidence" value="ECO:0000250"/>
    <property type="project" value="UniProtKB"/>
</dbReference>
<dbReference type="GO" id="GO:0006479">
    <property type="term" value="P:protein methylation"/>
    <property type="evidence" value="ECO:0000314"/>
    <property type="project" value="UniProtKB"/>
</dbReference>
<dbReference type="GO" id="GO:0006355">
    <property type="term" value="P:regulation of DNA-templated transcription"/>
    <property type="evidence" value="ECO:0000318"/>
    <property type="project" value="GO_Central"/>
</dbReference>
<dbReference type="GO" id="GO:0045652">
    <property type="term" value="P:regulation of megakaryocyte differentiation"/>
    <property type="evidence" value="ECO:0000250"/>
    <property type="project" value="UniProtKB"/>
</dbReference>
<dbReference type="GO" id="GO:0008380">
    <property type="term" value="P:RNA splicing"/>
    <property type="evidence" value="ECO:0000250"/>
    <property type="project" value="UniProtKB"/>
</dbReference>
<dbReference type="CDD" id="cd02440">
    <property type="entry name" value="AdoMet_MTases"/>
    <property type="match status" value="1"/>
</dbReference>
<dbReference type="FunFam" id="2.70.160.11:FF:000001">
    <property type="entry name" value="Blast:Protein arginine N-methyltransferase 1"/>
    <property type="match status" value="1"/>
</dbReference>
<dbReference type="FunFam" id="3.40.50.150:FF:000003">
    <property type="entry name" value="Blast:Protein arginine N-methyltransferase 1"/>
    <property type="match status" value="1"/>
</dbReference>
<dbReference type="Gene3D" id="2.70.160.11">
    <property type="entry name" value="Hnrnp arginine n-methyltransferase1"/>
    <property type="match status" value="1"/>
</dbReference>
<dbReference type="Gene3D" id="3.40.50.150">
    <property type="entry name" value="Vaccinia Virus protein VP39"/>
    <property type="match status" value="1"/>
</dbReference>
<dbReference type="InterPro" id="IPR025799">
    <property type="entry name" value="Arg_MeTrfase"/>
</dbReference>
<dbReference type="InterPro" id="IPR041698">
    <property type="entry name" value="Methyltransf_25"/>
</dbReference>
<dbReference type="InterPro" id="IPR055135">
    <property type="entry name" value="PRMT_dom"/>
</dbReference>
<dbReference type="InterPro" id="IPR029063">
    <property type="entry name" value="SAM-dependent_MTases_sf"/>
</dbReference>
<dbReference type="PANTHER" id="PTHR11006">
    <property type="entry name" value="PROTEIN ARGININE N-METHYLTRANSFERASE"/>
    <property type="match status" value="1"/>
</dbReference>
<dbReference type="PANTHER" id="PTHR11006:SF54">
    <property type="entry name" value="PROTEIN ARGININE N-METHYLTRANSFERASE 1"/>
    <property type="match status" value="1"/>
</dbReference>
<dbReference type="Pfam" id="PF13649">
    <property type="entry name" value="Methyltransf_25"/>
    <property type="match status" value="1"/>
</dbReference>
<dbReference type="Pfam" id="PF22528">
    <property type="entry name" value="PRMT_C"/>
    <property type="match status" value="1"/>
</dbReference>
<dbReference type="SUPFAM" id="SSF53335">
    <property type="entry name" value="S-adenosyl-L-methionine-dependent methyltransferases"/>
    <property type="match status" value="1"/>
</dbReference>
<dbReference type="PROSITE" id="PS51678">
    <property type="entry name" value="SAM_MT_PRMT"/>
    <property type="match status" value="1"/>
</dbReference>
<organism>
    <name type="scientific">Xenopus laevis</name>
    <name type="common">African clawed frog</name>
    <dbReference type="NCBI Taxonomy" id="8355"/>
    <lineage>
        <taxon>Eukaryota</taxon>
        <taxon>Metazoa</taxon>
        <taxon>Chordata</taxon>
        <taxon>Craniata</taxon>
        <taxon>Vertebrata</taxon>
        <taxon>Euteleostomi</taxon>
        <taxon>Amphibia</taxon>
        <taxon>Batrachia</taxon>
        <taxon>Anura</taxon>
        <taxon>Pipoidea</taxon>
        <taxon>Pipidae</taxon>
        <taxon>Xenopodinae</taxon>
        <taxon>Xenopus</taxon>
        <taxon>Xenopus</taxon>
    </lineage>
</organism>
<comment type="function">
    <text evidence="2 5 8">Arginine methyltransferase that methylates (mono and asymmetric dimethylation) the guanidino nitrogens of arginyl residues present in target proteins. Constitutes the main enzyme that mediates monomethylation and asymmetric dimethylation of histone H4 'Arg-4' (H4R3me1 and H4R3me2a, respectively), a specific tag for epigenetic transcriptional activation (By similarity). Methylates cirbp to regulate its subcellular location (PubMed:12466543). Acts transiently during metamorphosis as a transcription coactivator, enhancing thyroid hormone (T3) receptor (TR)-mediated transcription by enhancing TR binding to the T3 response element (TRE), and histone modification through recruitment of other coactivators (PubMed:19047371).</text>
</comment>
<comment type="catalytic activity">
    <reaction evidence="12">
        <text>L-arginyl-[protein] + 2 S-adenosyl-L-methionine = N(omega),N(omega)-dimethyl-L-arginyl-[protein] + 2 S-adenosyl-L-homocysteine + 2 H(+)</text>
        <dbReference type="Rhea" id="RHEA:48096"/>
        <dbReference type="Rhea" id="RHEA-COMP:10532"/>
        <dbReference type="Rhea" id="RHEA-COMP:11991"/>
        <dbReference type="ChEBI" id="CHEBI:15378"/>
        <dbReference type="ChEBI" id="CHEBI:29965"/>
        <dbReference type="ChEBI" id="CHEBI:57856"/>
        <dbReference type="ChEBI" id="CHEBI:59789"/>
        <dbReference type="ChEBI" id="CHEBI:61897"/>
        <dbReference type="EC" id="2.1.1.319"/>
    </reaction>
    <physiologicalReaction direction="left-to-right" evidence="12">
        <dbReference type="Rhea" id="RHEA:48097"/>
    </physiologicalReaction>
</comment>
<comment type="catalytic activity">
    <reaction evidence="5">
        <text>L-arginyl-[protein] + S-adenosyl-L-methionine = N(omega)-methyl-L-arginyl-[protein] + S-adenosyl-L-homocysteine + H(+)</text>
        <dbReference type="Rhea" id="RHEA:48100"/>
        <dbReference type="Rhea" id="RHEA-COMP:10532"/>
        <dbReference type="Rhea" id="RHEA-COMP:11990"/>
        <dbReference type="ChEBI" id="CHEBI:15378"/>
        <dbReference type="ChEBI" id="CHEBI:29965"/>
        <dbReference type="ChEBI" id="CHEBI:57856"/>
        <dbReference type="ChEBI" id="CHEBI:59789"/>
        <dbReference type="ChEBI" id="CHEBI:65280"/>
    </reaction>
    <physiologicalReaction direction="left-to-right" evidence="12">
        <dbReference type="Rhea" id="RHEA:48101"/>
    </physiologicalReaction>
</comment>
<comment type="catalytic activity">
    <reaction evidence="12">
        <text>N(omega)-methyl-L-arginyl-[protein] + S-adenosyl-L-methionine = N(omega),N(omega)-dimethyl-L-arginyl-[protein] + S-adenosyl-L-homocysteine + H(+)</text>
        <dbReference type="Rhea" id="RHEA:48104"/>
        <dbReference type="Rhea" id="RHEA-COMP:11990"/>
        <dbReference type="Rhea" id="RHEA-COMP:11991"/>
        <dbReference type="ChEBI" id="CHEBI:15378"/>
        <dbReference type="ChEBI" id="CHEBI:57856"/>
        <dbReference type="ChEBI" id="CHEBI:59789"/>
        <dbReference type="ChEBI" id="CHEBI:61897"/>
        <dbReference type="ChEBI" id="CHEBI:65280"/>
    </reaction>
    <physiologicalReaction direction="left-to-right" evidence="12">
        <dbReference type="Rhea" id="RHEA:48105"/>
    </physiologicalReaction>
</comment>
<comment type="subunit">
    <text evidence="2 5 7">Homodimer. Homooctamer; individual homodimers associates to form a homooctamer and homooligomerization is required for proper localization to the cell membrane. Individual homodimers can associate to form a homohexamer (By similarity). Component of a complex with lsm14a/rap55a. Interacts with cirbp.</text>
</comment>
<comment type="subcellular location">
    <subcellularLocation>
        <location evidence="3">Nucleus</location>
    </subcellularLocation>
    <subcellularLocation>
        <location evidence="3">Nucleus</location>
        <location evidence="3">Nucleoplasm</location>
    </subcellularLocation>
    <subcellularLocation>
        <location evidence="3">Cytoplasm</location>
        <location evidence="3">Cytosol</location>
    </subcellularLocation>
    <subcellularLocation>
        <location evidence="2">Cytoplasm</location>
    </subcellularLocation>
</comment>
<comment type="alternative products">
    <event type="alternative splicing"/>
    <isoform>
        <id>Q8AV13-1</id>
        <name evidence="5">1</name>
        <sequence type="displayed"/>
    </isoform>
    <isoform>
        <id>Q8AV13-2</id>
        <name>2</name>
        <sequence type="described" ref="VSP_053193"/>
    </isoform>
</comment>
<comment type="developmental stage">
    <text evidence="6 8">Expressed both maternally and zygotically. Expressed in oocytes (at protein level). Up-regulated during metamorphosis, peaking at stage 62 before dramatically reducing by the end of metamorphosis (stage 66).</text>
</comment>
<comment type="similarity">
    <text evidence="4">Belongs to the class I-like SAM-binding methyltransferase superfamily. Protein arginine N-methyltransferase family.</text>
</comment>
<comment type="sequence caution" evidence="11">
    <conflict type="erroneous initiation">
        <sequence resource="EMBL-CDS" id="AAH44033"/>
    </conflict>
    <text>Extended N-terminus.</text>
</comment>
<comment type="sequence caution" evidence="11">
    <conflict type="erroneous initiation">
        <sequence resource="EMBL-CDS" id="AAH54955"/>
    </conflict>
    <text>Truncated N-terminus.</text>
</comment>
<sequence length="369" mass="42325">MAEATTCNMENFVAKLANGMSLRTPIEDVNSAPPEGGVKTNAEDMTSKDYYFDSYAHFGIHEEMLKDEVRTLTYRNSMFHNRHLFKDKVVLDVGSGTGILCMFAAKAGAKKVIGIECSSISDYAIKIVKANKLDHVVTIIKGKVEEVELPVEKVDIIISEWMGYCLFYESMLNTVIYARDKWLTPDGLIFPDRATLYITAIEDRQYKDYKIHWWENVYGFDMSCIKDVAIKEPLVDVVDPKQLVSNACLIKEVDIYTVKVDDLSFTSPFCLQVKRNDYIHALVAYFNIEFTRCHKRTGFSTSPESPYTHWKQTVFYMEDYLTVKTGEEIFGTIGMKPNAKNNRDLDFTFDIDFKGQLCELSCSTDYRMR</sequence>
<proteinExistence type="evidence at protein level"/>
<gene>
    <name type="primary">prmt1-a</name>
    <name evidence="9" type="synonym">prmt1</name>
</gene>
<feature type="chain" id="PRO_0000391365" description="Protein arginine N-methyltransferase 1-A">
    <location>
        <begin position="1"/>
        <end position="369"/>
    </location>
</feature>
<feature type="domain" description="SAM-dependent MTase PRMT-type" evidence="4">
    <location>
        <begin position="48"/>
        <end position="369"/>
    </location>
</feature>
<feature type="active site" evidence="1">
    <location>
        <position position="160"/>
    </location>
</feature>
<feature type="active site" evidence="1">
    <location>
        <position position="169"/>
    </location>
</feature>
<feature type="binding site" evidence="1">
    <location>
        <position position="61"/>
    </location>
    <ligand>
        <name>S-adenosyl-L-methionine</name>
        <dbReference type="ChEBI" id="CHEBI:59789"/>
    </ligand>
</feature>
<feature type="binding site" evidence="1">
    <location>
        <position position="70"/>
    </location>
    <ligand>
        <name>S-adenosyl-L-methionine</name>
        <dbReference type="ChEBI" id="CHEBI:59789"/>
    </ligand>
</feature>
<feature type="binding site" evidence="1">
    <location>
        <position position="94"/>
    </location>
    <ligand>
        <name>S-adenosyl-L-methionine</name>
        <dbReference type="ChEBI" id="CHEBI:59789"/>
    </ligand>
</feature>
<feature type="binding site" evidence="1">
    <location>
        <position position="116"/>
    </location>
    <ligand>
        <name>S-adenosyl-L-methionine</name>
        <dbReference type="ChEBI" id="CHEBI:59789"/>
    </ligand>
</feature>
<feature type="binding site" evidence="1">
    <location>
        <position position="145"/>
    </location>
    <ligand>
        <name>S-adenosyl-L-methionine</name>
        <dbReference type="ChEBI" id="CHEBI:59789"/>
    </ligand>
</feature>
<feature type="splice variant" id="VSP_053193" description="In isoform 2." evidence="10">
    <location>
        <begin position="11"/>
        <end position="28"/>
    </location>
</feature>
<evidence type="ECO:0000250" key="1"/>
<evidence type="ECO:0000250" key="2">
    <source>
        <dbReference type="UniProtKB" id="Q99873"/>
    </source>
</evidence>
<evidence type="ECO:0000250" key="3">
    <source>
        <dbReference type="UniProtKB" id="Q9JIF0"/>
    </source>
</evidence>
<evidence type="ECO:0000255" key="4">
    <source>
        <dbReference type="PROSITE-ProRule" id="PRU01015"/>
    </source>
</evidence>
<evidence type="ECO:0000269" key="5">
    <source>
    </source>
</evidence>
<evidence type="ECO:0000269" key="6">
    <source>
    </source>
</evidence>
<evidence type="ECO:0000269" key="7">
    <source>
    </source>
</evidence>
<evidence type="ECO:0000269" key="8">
    <source>
    </source>
</evidence>
<evidence type="ECO:0000303" key="9">
    <source>
    </source>
</evidence>
<evidence type="ECO:0000303" key="10">
    <source ref="2"/>
</evidence>
<evidence type="ECO:0000305" key="11"/>
<evidence type="ECO:0000305" key="12">
    <source>
    </source>
</evidence>
<evidence type="ECO:0000312" key="13">
    <source>
        <dbReference type="EMBL" id="AAH44033.1"/>
    </source>
</evidence>
<evidence type="ECO:0000312" key="14">
    <source>
        <dbReference type="EMBL" id="AAH54955.1"/>
    </source>
</evidence>
<evidence type="ECO:0000312" key="15">
    <source>
        <dbReference type="EMBL" id="BAC53990.1"/>
    </source>
</evidence>
<protein>
    <recommendedName>
        <fullName evidence="15">Protein arginine N-methyltransferase 1-A</fullName>
        <shortName evidence="15">xPRMT1</shortName>
        <ecNumber evidence="5">2.1.1.319</ecNumber>
    </recommendedName>
    <alternativeName>
        <fullName>Histone-arginine N-methyltransferase PRMT1-A</fullName>
    </alternativeName>
</protein>